<name>NAGB_PECAS</name>
<protein>
    <recommendedName>
        <fullName evidence="1">Glucosamine-6-phosphate deaminase</fullName>
        <ecNumber evidence="1">3.5.99.6</ecNumber>
    </recommendedName>
    <alternativeName>
        <fullName evidence="1">GlcN6P deaminase</fullName>
        <shortName evidence="1">GNPDA</shortName>
    </alternativeName>
    <alternativeName>
        <fullName evidence="1">Glucosamine-6-phosphate isomerase</fullName>
    </alternativeName>
</protein>
<organism>
    <name type="scientific">Pectobacterium atrosepticum (strain SCRI 1043 / ATCC BAA-672)</name>
    <name type="common">Erwinia carotovora subsp. atroseptica</name>
    <dbReference type="NCBI Taxonomy" id="218491"/>
    <lineage>
        <taxon>Bacteria</taxon>
        <taxon>Pseudomonadati</taxon>
        <taxon>Pseudomonadota</taxon>
        <taxon>Gammaproteobacteria</taxon>
        <taxon>Enterobacterales</taxon>
        <taxon>Pectobacteriaceae</taxon>
        <taxon>Pectobacterium</taxon>
    </lineage>
</organism>
<evidence type="ECO:0000255" key="1">
    <source>
        <dbReference type="HAMAP-Rule" id="MF_01241"/>
    </source>
</evidence>
<comment type="function">
    <text evidence="1">Catalyzes the reversible isomerization-deamination of glucosamine 6-phosphate (GlcN6P) to form fructose 6-phosphate (Fru6P) and ammonium ion.</text>
</comment>
<comment type="catalytic activity">
    <reaction evidence="1">
        <text>alpha-D-glucosamine 6-phosphate + H2O = beta-D-fructose 6-phosphate + NH4(+)</text>
        <dbReference type="Rhea" id="RHEA:12172"/>
        <dbReference type="ChEBI" id="CHEBI:15377"/>
        <dbReference type="ChEBI" id="CHEBI:28938"/>
        <dbReference type="ChEBI" id="CHEBI:57634"/>
        <dbReference type="ChEBI" id="CHEBI:75989"/>
        <dbReference type="EC" id="3.5.99.6"/>
    </reaction>
</comment>
<comment type="activity regulation">
    <text evidence="1">Allosterically activated by N-acetylglucosamine 6-phosphate (GlcNAc6P).</text>
</comment>
<comment type="pathway">
    <text evidence="1">Amino-sugar metabolism; N-acetylneuraminate degradation; D-fructose 6-phosphate from N-acetylneuraminate: step 5/5.</text>
</comment>
<comment type="subunit">
    <text evidence="1">Homohexamer.</text>
</comment>
<comment type="similarity">
    <text evidence="1">Belongs to the glucosamine/galactosamine-6-phosphate isomerase family. NagB subfamily.</text>
</comment>
<dbReference type="EC" id="3.5.99.6" evidence="1"/>
<dbReference type="EMBL" id="BX950851">
    <property type="protein sequence ID" value="CAG74236.1"/>
    <property type="molecule type" value="Genomic_DNA"/>
</dbReference>
<dbReference type="RefSeq" id="WP_011092912.1">
    <property type="nucleotide sequence ID" value="NC_004547.2"/>
</dbReference>
<dbReference type="SMR" id="Q6D7J9"/>
<dbReference type="STRING" id="218491.ECA1326"/>
<dbReference type="GeneID" id="57208142"/>
<dbReference type="KEGG" id="eca:ECA1326"/>
<dbReference type="PATRIC" id="fig|218491.5.peg.1355"/>
<dbReference type="eggNOG" id="COG0363">
    <property type="taxonomic scope" value="Bacteria"/>
</dbReference>
<dbReference type="HOGENOM" id="CLU_049611_0_1_6"/>
<dbReference type="OrthoDB" id="9791139at2"/>
<dbReference type="UniPathway" id="UPA00629">
    <property type="reaction ID" value="UER00684"/>
</dbReference>
<dbReference type="Proteomes" id="UP000007966">
    <property type="component" value="Chromosome"/>
</dbReference>
<dbReference type="GO" id="GO:0005737">
    <property type="term" value="C:cytoplasm"/>
    <property type="evidence" value="ECO:0007669"/>
    <property type="project" value="TreeGrafter"/>
</dbReference>
<dbReference type="GO" id="GO:0004342">
    <property type="term" value="F:glucosamine-6-phosphate deaminase activity"/>
    <property type="evidence" value="ECO:0007669"/>
    <property type="project" value="UniProtKB-UniRule"/>
</dbReference>
<dbReference type="GO" id="GO:0042802">
    <property type="term" value="F:identical protein binding"/>
    <property type="evidence" value="ECO:0007669"/>
    <property type="project" value="TreeGrafter"/>
</dbReference>
<dbReference type="GO" id="GO:0005975">
    <property type="term" value="P:carbohydrate metabolic process"/>
    <property type="evidence" value="ECO:0007669"/>
    <property type="project" value="InterPro"/>
</dbReference>
<dbReference type="GO" id="GO:0006043">
    <property type="term" value="P:glucosamine catabolic process"/>
    <property type="evidence" value="ECO:0007669"/>
    <property type="project" value="TreeGrafter"/>
</dbReference>
<dbReference type="GO" id="GO:0006046">
    <property type="term" value="P:N-acetylglucosamine catabolic process"/>
    <property type="evidence" value="ECO:0007669"/>
    <property type="project" value="TreeGrafter"/>
</dbReference>
<dbReference type="GO" id="GO:0019262">
    <property type="term" value="P:N-acetylneuraminate catabolic process"/>
    <property type="evidence" value="ECO:0007669"/>
    <property type="project" value="UniProtKB-UniRule"/>
</dbReference>
<dbReference type="CDD" id="cd01399">
    <property type="entry name" value="GlcN6P_deaminase"/>
    <property type="match status" value="1"/>
</dbReference>
<dbReference type="FunFam" id="3.40.50.1360:FF:000002">
    <property type="entry name" value="Glucosamine-6-phosphate deaminase"/>
    <property type="match status" value="1"/>
</dbReference>
<dbReference type="Gene3D" id="3.40.50.1360">
    <property type="match status" value="1"/>
</dbReference>
<dbReference type="HAMAP" id="MF_01241">
    <property type="entry name" value="GlcN6P_deamin"/>
    <property type="match status" value="1"/>
</dbReference>
<dbReference type="InterPro" id="IPR006148">
    <property type="entry name" value="Glc/Gal-6P_isomerase"/>
</dbReference>
<dbReference type="InterPro" id="IPR004547">
    <property type="entry name" value="Glucosamine6P_isomerase"/>
</dbReference>
<dbReference type="InterPro" id="IPR018321">
    <property type="entry name" value="Glucosamine6P_isomerase_CS"/>
</dbReference>
<dbReference type="InterPro" id="IPR037171">
    <property type="entry name" value="NagB/RpiA_transferase-like"/>
</dbReference>
<dbReference type="NCBIfam" id="TIGR00502">
    <property type="entry name" value="nagB"/>
    <property type="match status" value="1"/>
</dbReference>
<dbReference type="NCBIfam" id="NF001685">
    <property type="entry name" value="PRK00443.1-5"/>
    <property type="match status" value="1"/>
</dbReference>
<dbReference type="PANTHER" id="PTHR11280">
    <property type="entry name" value="GLUCOSAMINE-6-PHOSPHATE ISOMERASE"/>
    <property type="match status" value="1"/>
</dbReference>
<dbReference type="PANTHER" id="PTHR11280:SF5">
    <property type="entry name" value="GLUCOSAMINE-6-PHOSPHATE ISOMERASE"/>
    <property type="match status" value="1"/>
</dbReference>
<dbReference type="Pfam" id="PF01182">
    <property type="entry name" value="Glucosamine_iso"/>
    <property type="match status" value="1"/>
</dbReference>
<dbReference type="SUPFAM" id="SSF100950">
    <property type="entry name" value="NagB/RpiA/CoA transferase-like"/>
    <property type="match status" value="1"/>
</dbReference>
<dbReference type="PROSITE" id="PS01161">
    <property type="entry name" value="GLC_GALNAC_ISOMERASE"/>
    <property type="match status" value="1"/>
</dbReference>
<gene>
    <name evidence="1" type="primary">nagB</name>
    <name type="ordered locus">ECA1326</name>
</gene>
<feature type="chain" id="PRO_1000066984" description="Glucosamine-6-phosphate deaminase">
    <location>
        <begin position="1"/>
        <end position="266"/>
    </location>
</feature>
<feature type="active site" description="Proton acceptor; for enolization step" evidence="1">
    <location>
        <position position="72"/>
    </location>
</feature>
<feature type="active site" description="For ring-opening step" evidence="1">
    <location>
        <position position="141"/>
    </location>
</feature>
<feature type="active site" description="Proton acceptor; for ring-opening step" evidence="1">
    <location>
        <position position="143"/>
    </location>
</feature>
<feature type="active site" description="For ring-opening step" evidence="1">
    <location>
        <position position="148"/>
    </location>
</feature>
<feature type="site" description="Part of the allosteric site" evidence="1">
    <location>
        <position position="151"/>
    </location>
</feature>
<feature type="site" description="Part of the allosteric site" evidence="1">
    <location>
        <position position="158"/>
    </location>
</feature>
<feature type="site" description="Part of the allosteric site" evidence="1">
    <location>
        <position position="160"/>
    </location>
</feature>
<feature type="site" description="Part of the allosteric site" evidence="1">
    <location>
        <position position="161"/>
    </location>
</feature>
<feature type="site" description="Part of the allosteric site" evidence="1">
    <location>
        <position position="254"/>
    </location>
</feature>
<keyword id="KW-0021">Allosteric enzyme</keyword>
<keyword id="KW-0119">Carbohydrate metabolism</keyword>
<keyword id="KW-0378">Hydrolase</keyword>
<keyword id="KW-1185">Reference proteome</keyword>
<sequence length="266" mass="29636">MRLIPLTTAADVGKWAARHIVEKINAFKPSAERPFILGLPTGTSPLEAYKSLVTMHKAGLVSFKHVVTFNMDEYVGLPTDHPESYHTFMHQNFFNHIDILRENINLLNGNAADTTAECRRYEEKIKSYGKIHLFMGGVGNDGHIAFNEPASSLASRTRIKTLTEETRIANSRFFGGDVSLVPKFALTVGVGTLLDAEEVMILVTGRNKAQALQAAVEGNVNHMWTISCLQLHAKAIMVCDEPSTMELKVKTVKYFRELETESMKNL</sequence>
<proteinExistence type="inferred from homology"/>
<reference key="1">
    <citation type="journal article" date="2004" name="Proc. Natl. Acad. Sci. U.S.A.">
        <title>Genome sequence of the enterobacterial phytopathogen Erwinia carotovora subsp. atroseptica and characterization of virulence factors.</title>
        <authorList>
            <person name="Bell K.S."/>
            <person name="Sebaihia M."/>
            <person name="Pritchard L."/>
            <person name="Holden M.T.G."/>
            <person name="Hyman L.J."/>
            <person name="Holeva M.C."/>
            <person name="Thomson N.R."/>
            <person name="Bentley S.D."/>
            <person name="Churcher L.J.C."/>
            <person name="Mungall K."/>
            <person name="Atkin R."/>
            <person name="Bason N."/>
            <person name="Brooks K."/>
            <person name="Chillingworth T."/>
            <person name="Clark K."/>
            <person name="Doggett J."/>
            <person name="Fraser A."/>
            <person name="Hance Z."/>
            <person name="Hauser H."/>
            <person name="Jagels K."/>
            <person name="Moule S."/>
            <person name="Norbertczak H."/>
            <person name="Ormond D."/>
            <person name="Price C."/>
            <person name="Quail M.A."/>
            <person name="Sanders M."/>
            <person name="Walker D."/>
            <person name="Whitehead S."/>
            <person name="Salmond G.P.C."/>
            <person name="Birch P.R.J."/>
            <person name="Parkhill J."/>
            <person name="Toth I.K."/>
        </authorList>
    </citation>
    <scope>NUCLEOTIDE SEQUENCE [LARGE SCALE GENOMIC DNA]</scope>
    <source>
        <strain>SCRI 1043 / ATCC BAA-672</strain>
    </source>
</reference>
<accession>Q6D7J9</accession>